<accession>Q2TAF3</accession>
<name>EMAL4_XENLA</name>
<reference key="1">
    <citation type="submission" date="2005-12" db="EMBL/GenBank/DDBJ databases">
        <authorList>
            <consortium name="NIH - Xenopus Gene Collection (XGC) project"/>
        </authorList>
    </citation>
    <scope>NUCLEOTIDE SEQUENCE [LARGE SCALE MRNA]</scope>
    <source>
        <tissue>Oocyte</tissue>
    </source>
</reference>
<gene>
    <name type="primary">eml4</name>
</gene>
<protein>
    <recommendedName>
        <fullName>Echinoderm microtubule-associated protein-like 4</fullName>
        <shortName>EMAP-4</shortName>
    </recommendedName>
</protein>
<keyword id="KW-0131">Cell cycle</keyword>
<keyword id="KW-0132">Cell division</keyword>
<keyword id="KW-0175">Coiled coil</keyword>
<keyword id="KW-0963">Cytoplasm</keyword>
<keyword id="KW-0206">Cytoskeleton</keyword>
<keyword id="KW-0493">Microtubule</keyword>
<keyword id="KW-0498">Mitosis</keyword>
<keyword id="KW-1185">Reference proteome</keyword>
<keyword id="KW-0677">Repeat</keyword>
<keyword id="KW-0853">WD repeat</keyword>
<proteinExistence type="evidence at transcript level"/>
<evidence type="ECO:0000250" key="1">
    <source>
        <dbReference type="UniProtKB" id="Q9HC35"/>
    </source>
</evidence>
<evidence type="ECO:0000256" key="2">
    <source>
        <dbReference type="SAM" id="MobiDB-lite"/>
    </source>
</evidence>
<evidence type="ECO:0000305" key="3"/>
<comment type="function">
    <text evidence="1">Essential for the formation and stability of microtubules (MTs) (By similarity). Required for the organization of the mitotic spindle and for the proper attachment of kinetochores to MTs (By similarity). Promotes the recruitment of NUDC to the mitotic spindle for mitotic progression (By similarity).</text>
</comment>
<comment type="subunit">
    <text evidence="1">Homotrimer; self-association is mediated by the N-terminal coiled coil.</text>
</comment>
<comment type="subcellular location">
    <subcellularLocation>
        <location evidence="3">Cytoplasm</location>
        <location evidence="3">Cytoskeleton</location>
    </subcellularLocation>
    <subcellularLocation>
        <location evidence="1">Cytoplasm</location>
        <location evidence="1">Cytoskeleton</location>
        <location evidence="1">Spindle</location>
    </subcellularLocation>
    <subcellularLocation>
        <location evidence="1">Cytoplasm</location>
    </subcellularLocation>
    <subcellularLocation>
        <location evidence="1">Cytoplasm</location>
        <location evidence="1">Cytoskeleton</location>
        <location evidence="1">Microtubule organizing center</location>
    </subcellularLocation>
    <subcellularLocation>
        <location evidence="1">Midbody</location>
    </subcellularLocation>
    <text evidence="1">Localizes to microtubules (MTs) during interphase with a significantly reduced affinity for MTs during mitosis.</text>
</comment>
<comment type="similarity">
    <text evidence="3">Belongs to the WD repeat EMAP family.</text>
</comment>
<feature type="chain" id="PRO_0000284393" description="Echinoderm microtubule-associated protein-like 4">
    <location>
        <begin position="1"/>
        <end position="927"/>
    </location>
</feature>
<feature type="repeat" description="WD 1">
    <location>
        <begin position="199"/>
        <end position="237"/>
    </location>
</feature>
<feature type="repeat" description="WD 2">
    <location>
        <begin position="241"/>
        <end position="288"/>
    </location>
</feature>
<feature type="repeat" description="WD 3">
    <location>
        <begin position="296"/>
        <end position="336"/>
    </location>
</feature>
<feature type="repeat" description="WD 4">
    <location>
        <begin position="343"/>
        <end position="378"/>
    </location>
</feature>
<feature type="repeat" description="WD 5">
    <location>
        <begin position="385"/>
        <end position="424"/>
    </location>
</feature>
<feature type="repeat" description="WD 6">
    <location>
        <begin position="442"/>
        <end position="480"/>
    </location>
</feature>
<feature type="repeat" description="WD 7">
    <location>
        <begin position="485"/>
        <end position="521"/>
    </location>
</feature>
<feature type="repeat" description="WD 8">
    <location>
        <begin position="524"/>
        <end position="563"/>
    </location>
</feature>
<feature type="repeat" description="WD 9">
    <location>
        <begin position="567"/>
        <end position="604"/>
    </location>
</feature>
<feature type="repeat" description="WD 10">
    <location>
        <begin position="610"/>
        <end position="646"/>
    </location>
</feature>
<feature type="repeat" description="WD 11">
    <location>
        <begin position="653"/>
        <end position="692"/>
    </location>
</feature>
<feature type="repeat" description="WD 12">
    <location>
        <begin position="702"/>
        <end position="760"/>
    </location>
</feature>
<feature type="repeat" description="WD 13">
    <location>
        <begin position="767"/>
        <end position="806"/>
    </location>
</feature>
<feature type="region of interest" description="Microtubule-binding" evidence="1">
    <location>
        <begin position="1"/>
        <end position="189"/>
    </location>
</feature>
<feature type="region of interest" description="Disordered" evidence="2">
    <location>
        <begin position="85"/>
        <end position="132"/>
    </location>
</feature>
<feature type="region of interest" description="Disordered" evidence="2">
    <location>
        <begin position="815"/>
        <end position="927"/>
    </location>
</feature>
<feature type="coiled-coil region" evidence="1">
    <location>
        <begin position="14"/>
        <end position="63"/>
    </location>
</feature>
<feature type="compositionally biased region" description="Basic and acidic residues" evidence="2">
    <location>
        <begin position="116"/>
        <end position="132"/>
    </location>
</feature>
<feature type="compositionally biased region" description="Polar residues" evidence="2">
    <location>
        <begin position="815"/>
        <end position="829"/>
    </location>
</feature>
<feature type="compositionally biased region" description="Acidic residues" evidence="2">
    <location>
        <begin position="914"/>
        <end position="927"/>
    </location>
</feature>
<dbReference type="EMBL" id="BC110954">
    <property type="protein sequence ID" value="AAI10955.1"/>
    <property type="molecule type" value="mRNA"/>
</dbReference>
<dbReference type="RefSeq" id="NP_001089952.1">
    <property type="nucleotide sequence ID" value="NM_001096483.1"/>
</dbReference>
<dbReference type="SMR" id="Q2TAF3"/>
<dbReference type="BioGRID" id="592803">
    <property type="interactions" value="2"/>
</dbReference>
<dbReference type="IntAct" id="Q2TAF3">
    <property type="interactions" value="2"/>
</dbReference>
<dbReference type="DNASU" id="735022"/>
<dbReference type="GeneID" id="735022"/>
<dbReference type="KEGG" id="xla:735022"/>
<dbReference type="AGR" id="Xenbase:XB-GENE-971033"/>
<dbReference type="CTD" id="735022"/>
<dbReference type="Xenbase" id="XB-GENE-971033">
    <property type="gene designation" value="eml4.S"/>
</dbReference>
<dbReference type="OrthoDB" id="47802at2759"/>
<dbReference type="CD-CODE" id="78E86D56">
    <property type="entry name" value="Mitochondrial cloud"/>
</dbReference>
<dbReference type="Proteomes" id="UP000186698">
    <property type="component" value="Chromosome 5S"/>
</dbReference>
<dbReference type="Bgee" id="735022">
    <property type="expression patterns" value="Expressed in egg cell and 19 other cell types or tissues"/>
</dbReference>
<dbReference type="GO" id="GO:0005737">
    <property type="term" value="C:cytoplasm"/>
    <property type="evidence" value="ECO:0000250"/>
    <property type="project" value="UniProtKB"/>
</dbReference>
<dbReference type="GO" id="GO:0005874">
    <property type="term" value="C:microtubule"/>
    <property type="evidence" value="ECO:0000250"/>
    <property type="project" value="UniProtKB"/>
</dbReference>
<dbReference type="GO" id="GO:0005815">
    <property type="term" value="C:microtubule organizing center"/>
    <property type="evidence" value="ECO:0000250"/>
    <property type="project" value="UniProtKB"/>
</dbReference>
<dbReference type="GO" id="GO:0030496">
    <property type="term" value="C:midbody"/>
    <property type="evidence" value="ECO:0000250"/>
    <property type="project" value="UniProtKB"/>
</dbReference>
<dbReference type="GO" id="GO:0072686">
    <property type="term" value="C:mitotic spindle"/>
    <property type="evidence" value="ECO:0000250"/>
    <property type="project" value="UniProtKB"/>
</dbReference>
<dbReference type="GO" id="GO:0008017">
    <property type="term" value="F:microtubule binding"/>
    <property type="evidence" value="ECO:0000318"/>
    <property type="project" value="GO_Central"/>
</dbReference>
<dbReference type="GO" id="GO:0008608">
    <property type="term" value="P:attachment of spindle microtubules to kinetochore"/>
    <property type="evidence" value="ECO:0000250"/>
    <property type="project" value="UniProtKB"/>
</dbReference>
<dbReference type="GO" id="GO:0051301">
    <property type="term" value="P:cell division"/>
    <property type="evidence" value="ECO:0007669"/>
    <property type="project" value="UniProtKB-KW"/>
</dbReference>
<dbReference type="GO" id="GO:0000226">
    <property type="term" value="P:microtubule cytoskeleton organization"/>
    <property type="evidence" value="ECO:0000318"/>
    <property type="project" value="GO_Central"/>
</dbReference>
<dbReference type="GO" id="GO:0007080">
    <property type="term" value="P:mitotic metaphase chromosome alignment"/>
    <property type="evidence" value="ECO:0000250"/>
    <property type="project" value="UniProtKB"/>
</dbReference>
<dbReference type="CDD" id="cd21950">
    <property type="entry name" value="TD_EMAP4"/>
    <property type="match status" value="1"/>
</dbReference>
<dbReference type="FunFam" id="2.130.10.10:FF:000019">
    <property type="entry name" value="echinoderm microtubule-associated protein-like 4 isoform X2"/>
    <property type="match status" value="1"/>
</dbReference>
<dbReference type="FunFam" id="2.130.10.10:FF:003552">
    <property type="entry name" value="Uncharacterized protein"/>
    <property type="match status" value="1"/>
</dbReference>
<dbReference type="Gene3D" id="2.130.10.10">
    <property type="entry name" value="YVTN repeat-like/Quinoprotein amine dehydrogenase"/>
    <property type="match status" value="2"/>
</dbReference>
<dbReference type="InterPro" id="IPR055442">
    <property type="entry name" value="Beta-prop_EML-like_2nd"/>
</dbReference>
<dbReference type="InterPro" id="IPR055439">
    <property type="entry name" value="Beta-prop_EML_1st"/>
</dbReference>
<dbReference type="InterPro" id="IPR005108">
    <property type="entry name" value="HELP"/>
</dbReference>
<dbReference type="InterPro" id="IPR011047">
    <property type="entry name" value="Quinoprotein_ADH-like_sf"/>
</dbReference>
<dbReference type="InterPro" id="IPR015943">
    <property type="entry name" value="WD40/YVTN_repeat-like_dom_sf"/>
</dbReference>
<dbReference type="InterPro" id="IPR036322">
    <property type="entry name" value="WD40_repeat_dom_sf"/>
</dbReference>
<dbReference type="InterPro" id="IPR001680">
    <property type="entry name" value="WD40_rpt"/>
</dbReference>
<dbReference type="InterPro" id="IPR050630">
    <property type="entry name" value="WD_repeat_EMAP"/>
</dbReference>
<dbReference type="PANTHER" id="PTHR13720:SF11">
    <property type="entry name" value="ECHINODERM MICROTUBULE-ASSOCIATED PROTEIN-LIKE 4"/>
    <property type="match status" value="1"/>
</dbReference>
<dbReference type="PANTHER" id="PTHR13720">
    <property type="entry name" value="WD-40 REPEAT PROTEIN"/>
    <property type="match status" value="1"/>
</dbReference>
<dbReference type="Pfam" id="PF23409">
    <property type="entry name" value="Beta-prop_EML"/>
    <property type="match status" value="1"/>
</dbReference>
<dbReference type="Pfam" id="PF23414">
    <property type="entry name" value="Beta-prop_EML_2"/>
    <property type="match status" value="1"/>
</dbReference>
<dbReference type="Pfam" id="PF03451">
    <property type="entry name" value="HELP"/>
    <property type="match status" value="1"/>
</dbReference>
<dbReference type="SMART" id="SM00320">
    <property type="entry name" value="WD40"/>
    <property type="match status" value="9"/>
</dbReference>
<dbReference type="SUPFAM" id="SSF50998">
    <property type="entry name" value="Quinoprotein alcohol dehydrogenase-like"/>
    <property type="match status" value="1"/>
</dbReference>
<dbReference type="SUPFAM" id="SSF50978">
    <property type="entry name" value="WD40 repeat-like"/>
    <property type="match status" value="1"/>
</dbReference>
<dbReference type="PROSITE" id="PS00678">
    <property type="entry name" value="WD_REPEATS_1"/>
    <property type="match status" value="1"/>
</dbReference>
<dbReference type="PROSITE" id="PS50082">
    <property type="entry name" value="WD_REPEATS_2"/>
    <property type="match status" value="4"/>
</dbReference>
<dbReference type="PROSITE" id="PS50294">
    <property type="entry name" value="WD_REPEATS_REGION"/>
    <property type="match status" value="3"/>
</dbReference>
<sequence>MDGFAGSLDDSVSAASTSDVQDRLSALELRVQQQEDEITVLKAALADVLRRLAISEDQVATVRKAVPSKGPATLREALSMSCITNGGAGTRKPSHASSVAKKDTLSSAAKSVKRSSTLEKSHNSWDASEESRNKLMRAASTSKLTSKVSKATDKHKDIVISPEGEYIKMFMRGRPITMFIPSDVENYDDVRTELPPEKLKLEWVFGYRGRDCRANVYLLPTGEIVYFIASVVVLFNYEERTQRHYLGHTDCVKCIAVHPDKIRIATGQIAGVDKDGRPLQPHVRVWDSVSLSTLQVIGLGTFERGVGCLAFSKADSGVHLSVIDDSNEHMLTVWDWQKKSKIAEIKTTNEVVLAVEFHPTDAGTIVTCGKSHIFFWTWSGNSLARKQGIFGKYEKPKFVQCLAFLANGDVLAGDSGGIMLIWSKTNVESTASKGAKVLGVYQISKQIKAHDGSVFTLCQMRNGMLLTGGGKDRKVIMWDHDLNPEREIEVPDQYGTIRAVAEGKGDQFLVGTSRNFILRGTFNDGFQVEVQGHTDELWGLATHPFKDLLLTCAQDKQVCLWNSVDHSLEWTRVLDEPGHCADFHPTGTVVAIGTHSGRWFVLDAETRDLVSIHTDGNEQLSVMRYSVDGALLAVGSHDNFIYLYNVSENGRKYSRYGKCTGHSSYITHLDWSPDNQYIMSNSGDYEILYWDIPSGCKLIRNRSECKDINWTTYTCVLGFQVFGVWPEGSDGTDINALVRSHNRKVIALADDFCKVHLFQYPCSKPKAPSHKYSAHSSHVTNVSFTHNDGHLISTGGKDMSIMQWRLIEKVSHSQNDNIAESSSAVNSPVVSEKVLQPDTPTTLPQAVNKATEVEQTPAESMAPPEDALELEAQQPQDLDDVQSGKSSPLPEEANGQEPSDEVIEEPANSQIVDAQDENQDDDDAPLS</sequence>
<organism>
    <name type="scientific">Xenopus laevis</name>
    <name type="common">African clawed frog</name>
    <dbReference type="NCBI Taxonomy" id="8355"/>
    <lineage>
        <taxon>Eukaryota</taxon>
        <taxon>Metazoa</taxon>
        <taxon>Chordata</taxon>
        <taxon>Craniata</taxon>
        <taxon>Vertebrata</taxon>
        <taxon>Euteleostomi</taxon>
        <taxon>Amphibia</taxon>
        <taxon>Batrachia</taxon>
        <taxon>Anura</taxon>
        <taxon>Pipoidea</taxon>
        <taxon>Pipidae</taxon>
        <taxon>Xenopodinae</taxon>
        <taxon>Xenopus</taxon>
        <taxon>Xenopus</taxon>
    </lineage>
</organism>